<proteinExistence type="evidence at transcript level"/>
<dbReference type="EC" id="3.1.-.-"/>
<dbReference type="EMBL" id="AC004809">
    <property type="protein sequence ID" value="AAF40461.1"/>
    <property type="status" value="ALT_SEQ"/>
    <property type="molecule type" value="Genomic_DNA"/>
</dbReference>
<dbReference type="EMBL" id="CP002684">
    <property type="protein sequence ID" value="AEE27775.1"/>
    <property type="molecule type" value="Genomic_DNA"/>
</dbReference>
<dbReference type="EMBL" id="CP002684">
    <property type="protein sequence ID" value="AEE27776.1"/>
    <property type="molecule type" value="Genomic_DNA"/>
</dbReference>
<dbReference type="EMBL" id="CP002684">
    <property type="protein sequence ID" value="ANM60931.1"/>
    <property type="molecule type" value="Genomic_DNA"/>
</dbReference>
<dbReference type="EMBL" id="AY048253">
    <property type="protein sequence ID" value="AAK82515.1"/>
    <property type="molecule type" value="mRNA"/>
</dbReference>
<dbReference type="EMBL" id="AY113065">
    <property type="protein sequence ID" value="AAM47373.1"/>
    <property type="molecule type" value="mRNA"/>
</dbReference>
<dbReference type="PIR" id="F86183">
    <property type="entry name" value="F86183"/>
</dbReference>
<dbReference type="RefSeq" id="NP_001318923.1">
    <property type="nucleotide sequence ID" value="NM_001331509.1"/>
</dbReference>
<dbReference type="RefSeq" id="NP_563725.1">
    <property type="nucleotide sequence ID" value="NM_100378.5"/>
</dbReference>
<dbReference type="RefSeq" id="NP_973759.1">
    <property type="nucleotide sequence ID" value="NM_202030.2"/>
</dbReference>
<dbReference type="BioGRID" id="24586">
    <property type="interactions" value="8"/>
</dbReference>
<dbReference type="FunCoup" id="Q94AD9">
    <property type="interactions" value="30"/>
</dbReference>
<dbReference type="IntAct" id="Q94AD9">
    <property type="interactions" value="5"/>
</dbReference>
<dbReference type="STRING" id="3702.Q94AD9"/>
<dbReference type="iPTMnet" id="Q94AD9"/>
<dbReference type="PaxDb" id="3702-AT1G04990.1"/>
<dbReference type="ProteomicsDB" id="240493"/>
<dbReference type="EnsemblPlants" id="AT1G04990.1">
    <property type="protein sequence ID" value="AT1G04990.1"/>
    <property type="gene ID" value="AT1G04990"/>
</dbReference>
<dbReference type="EnsemblPlants" id="AT1G04990.2">
    <property type="protein sequence ID" value="AT1G04990.2"/>
    <property type="gene ID" value="AT1G04990"/>
</dbReference>
<dbReference type="EnsemblPlants" id="AT1G04990.6">
    <property type="protein sequence ID" value="AT1G04990.6"/>
    <property type="gene ID" value="AT1G04990"/>
</dbReference>
<dbReference type="GeneID" id="839351"/>
<dbReference type="Gramene" id="AT1G04990.1">
    <property type="protein sequence ID" value="AT1G04990.1"/>
    <property type="gene ID" value="AT1G04990"/>
</dbReference>
<dbReference type="Gramene" id="AT1G04990.2">
    <property type="protein sequence ID" value="AT1G04990.2"/>
    <property type="gene ID" value="AT1G04990"/>
</dbReference>
<dbReference type="Gramene" id="AT1G04990.6">
    <property type="protein sequence ID" value="AT1G04990.6"/>
    <property type="gene ID" value="AT1G04990"/>
</dbReference>
<dbReference type="KEGG" id="ath:AT1G04990"/>
<dbReference type="Araport" id="AT1G04990"/>
<dbReference type="TAIR" id="AT1G04990"/>
<dbReference type="eggNOG" id="KOG1677">
    <property type="taxonomic scope" value="Eukaryota"/>
</dbReference>
<dbReference type="HOGENOM" id="CLU_033292_2_0_1"/>
<dbReference type="InParanoid" id="Q94AD9"/>
<dbReference type="OMA" id="WATYMGA"/>
<dbReference type="OrthoDB" id="411372at2759"/>
<dbReference type="PhylomeDB" id="Q94AD9"/>
<dbReference type="PRO" id="PR:Q94AD9"/>
<dbReference type="Proteomes" id="UP000006548">
    <property type="component" value="Chromosome 1"/>
</dbReference>
<dbReference type="ExpressionAtlas" id="Q94AD9">
    <property type="expression patterns" value="baseline and differential"/>
</dbReference>
<dbReference type="GO" id="GO:0005634">
    <property type="term" value="C:nucleus"/>
    <property type="evidence" value="ECO:0007669"/>
    <property type="project" value="UniProtKB-SubCell"/>
</dbReference>
<dbReference type="GO" id="GO:0003677">
    <property type="term" value="F:DNA binding"/>
    <property type="evidence" value="ECO:0007669"/>
    <property type="project" value="UniProtKB-KW"/>
</dbReference>
<dbReference type="GO" id="GO:0003729">
    <property type="term" value="F:mRNA binding"/>
    <property type="evidence" value="ECO:0000314"/>
    <property type="project" value="TAIR"/>
</dbReference>
<dbReference type="GO" id="GO:0004518">
    <property type="term" value="F:nuclease activity"/>
    <property type="evidence" value="ECO:0007669"/>
    <property type="project" value="UniProtKB-KW"/>
</dbReference>
<dbReference type="GO" id="GO:0008270">
    <property type="term" value="F:zinc ion binding"/>
    <property type="evidence" value="ECO:0007669"/>
    <property type="project" value="UniProtKB-KW"/>
</dbReference>
<dbReference type="FunFam" id="4.10.1000.10:FF:000080">
    <property type="entry name" value="Zinc finger CCCH domain-containing protein 3"/>
    <property type="match status" value="1"/>
</dbReference>
<dbReference type="Gene3D" id="2.30.30.1190">
    <property type="match status" value="1"/>
</dbReference>
<dbReference type="Gene3D" id="4.10.1000.10">
    <property type="entry name" value="Zinc finger, CCCH-type"/>
    <property type="match status" value="2"/>
</dbReference>
<dbReference type="InterPro" id="IPR050974">
    <property type="entry name" value="Plant_ZF_CCCH"/>
</dbReference>
<dbReference type="InterPro" id="IPR000571">
    <property type="entry name" value="Znf_CCCH"/>
</dbReference>
<dbReference type="InterPro" id="IPR036855">
    <property type="entry name" value="Znf_CCCH_sf"/>
</dbReference>
<dbReference type="PANTHER" id="PTHR12506">
    <property type="entry name" value="PROTEIN PHOSPHATASE RELATED"/>
    <property type="match status" value="1"/>
</dbReference>
<dbReference type="PANTHER" id="PTHR12506:SF79">
    <property type="entry name" value="ZINC FINGER C-X8-C-X5-C-X3-H TYPE FAMILY PROTEIN-RELATED"/>
    <property type="match status" value="1"/>
</dbReference>
<dbReference type="Pfam" id="PF00642">
    <property type="entry name" value="zf-CCCH"/>
    <property type="match status" value="5"/>
</dbReference>
<dbReference type="SMART" id="SM00356">
    <property type="entry name" value="ZnF_C3H1"/>
    <property type="match status" value="5"/>
</dbReference>
<dbReference type="SUPFAM" id="SSF90229">
    <property type="entry name" value="CCCH zinc finger"/>
    <property type="match status" value="5"/>
</dbReference>
<dbReference type="PROSITE" id="PS50103">
    <property type="entry name" value="ZF_C3H1"/>
    <property type="match status" value="5"/>
</dbReference>
<protein>
    <recommendedName>
        <fullName>Zinc finger CCCH domain-containing protein 3</fullName>
        <shortName>AtC3H3</shortName>
        <ecNumber>3.1.-.-</ecNumber>
    </recommendedName>
    <alternativeName>
        <fullName>Zinc finger CCCH domain-containing protein ZFN-like 4</fullName>
    </alternativeName>
</protein>
<gene>
    <name type="ordered locus">At1g04990</name>
    <name type="ORF">F13M7.1</name>
</gene>
<sequence>MRTPMSDTQHVQSSLVSIRSSDKIEDAFRKMKVNETGVEELNPYPDRPGERDCQFYLRTGLCGYGSSCRYNHPTHLPQDVAYYKEELPERIGQPDCEYFLKTGACKYGPTCKYHHPKDRNGAQPVMFNVIGLPMRLGEKPCPYYLRTGTCRFGVACKFHHPQPDNGHSTAYGMSSFPAADLRYASGLTMMSTYGTLPRPQVPQSYVPILVSPSQGFLPPQGWAPYMAASNSMYNVKNQPYYSGSSASMAMAVALNRGLSESSDQPECRFFMNTGTCKYGDDCKYSHPGVRISQPPPSLINPFVLPARPGQPACGNFRSYGFCKFGPNCKFDHPMLPYPGLTMATSLPTPFASPVTTHQRISPTPNRSDSKSLSNGKPDVKKESSETEKPDNGEVQDLSEDASSP</sequence>
<evidence type="ECO:0000250" key="1"/>
<evidence type="ECO:0000255" key="2">
    <source>
        <dbReference type="PROSITE-ProRule" id="PRU00723"/>
    </source>
</evidence>
<evidence type="ECO:0000256" key="3">
    <source>
        <dbReference type="SAM" id="MobiDB-lite"/>
    </source>
</evidence>
<evidence type="ECO:0000269" key="4">
    <source>
    </source>
</evidence>
<evidence type="ECO:0000305" key="5"/>
<keyword id="KW-0238">DNA-binding</keyword>
<keyword id="KW-0378">Hydrolase</keyword>
<keyword id="KW-0479">Metal-binding</keyword>
<keyword id="KW-0540">Nuclease</keyword>
<keyword id="KW-0539">Nucleus</keyword>
<keyword id="KW-1185">Reference proteome</keyword>
<keyword id="KW-0677">Repeat</keyword>
<keyword id="KW-0694">RNA-binding</keyword>
<keyword id="KW-0862">Zinc</keyword>
<keyword id="KW-0863">Zinc-finger</keyword>
<reference key="1">
    <citation type="journal article" date="2000" name="Nature">
        <title>Sequence and analysis of chromosome 1 of the plant Arabidopsis thaliana.</title>
        <authorList>
            <person name="Theologis A."/>
            <person name="Ecker J.R."/>
            <person name="Palm C.J."/>
            <person name="Federspiel N.A."/>
            <person name="Kaul S."/>
            <person name="White O."/>
            <person name="Alonso J."/>
            <person name="Altafi H."/>
            <person name="Araujo R."/>
            <person name="Bowman C.L."/>
            <person name="Brooks S.Y."/>
            <person name="Buehler E."/>
            <person name="Chan A."/>
            <person name="Chao Q."/>
            <person name="Chen H."/>
            <person name="Cheuk R.F."/>
            <person name="Chin C.W."/>
            <person name="Chung M.K."/>
            <person name="Conn L."/>
            <person name="Conway A.B."/>
            <person name="Conway A.R."/>
            <person name="Creasy T.H."/>
            <person name="Dewar K."/>
            <person name="Dunn P."/>
            <person name="Etgu P."/>
            <person name="Feldblyum T.V."/>
            <person name="Feng J.-D."/>
            <person name="Fong B."/>
            <person name="Fujii C.Y."/>
            <person name="Gill J.E."/>
            <person name="Goldsmith A.D."/>
            <person name="Haas B."/>
            <person name="Hansen N.F."/>
            <person name="Hughes B."/>
            <person name="Huizar L."/>
            <person name="Hunter J.L."/>
            <person name="Jenkins J."/>
            <person name="Johnson-Hopson C."/>
            <person name="Khan S."/>
            <person name="Khaykin E."/>
            <person name="Kim C.J."/>
            <person name="Koo H.L."/>
            <person name="Kremenetskaia I."/>
            <person name="Kurtz D.B."/>
            <person name="Kwan A."/>
            <person name="Lam B."/>
            <person name="Langin-Hooper S."/>
            <person name="Lee A."/>
            <person name="Lee J.M."/>
            <person name="Lenz C.A."/>
            <person name="Li J.H."/>
            <person name="Li Y.-P."/>
            <person name="Lin X."/>
            <person name="Liu S.X."/>
            <person name="Liu Z.A."/>
            <person name="Luros J.S."/>
            <person name="Maiti R."/>
            <person name="Marziali A."/>
            <person name="Militscher J."/>
            <person name="Miranda M."/>
            <person name="Nguyen M."/>
            <person name="Nierman W.C."/>
            <person name="Osborne B.I."/>
            <person name="Pai G."/>
            <person name="Peterson J."/>
            <person name="Pham P.K."/>
            <person name="Rizzo M."/>
            <person name="Rooney T."/>
            <person name="Rowley D."/>
            <person name="Sakano H."/>
            <person name="Salzberg S.L."/>
            <person name="Schwartz J.R."/>
            <person name="Shinn P."/>
            <person name="Southwick A.M."/>
            <person name="Sun H."/>
            <person name="Tallon L.J."/>
            <person name="Tambunga G."/>
            <person name="Toriumi M.J."/>
            <person name="Town C.D."/>
            <person name="Utterback T."/>
            <person name="Van Aken S."/>
            <person name="Vaysberg M."/>
            <person name="Vysotskaia V.S."/>
            <person name="Walker M."/>
            <person name="Wu D."/>
            <person name="Yu G."/>
            <person name="Fraser C.M."/>
            <person name="Venter J.C."/>
            <person name="Davis R.W."/>
        </authorList>
    </citation>
    <scope>NUCLEOTIDE SEQUENCE [LARGE SCALE GENOMIC DNA]</scope>
    <source>
        <strain>cv. Columbia</strain>
    </source>
</reference>
<reference key="2">
    <citation type="journal article" date="2017" name="Plant J.">
        <title>Araport11: a complete reannotation of the Arabidopsis thaliana reference genome.</title>
        <authorList>
            <person name="Cheng C.Y."/>
            <person name="Krishnakumar V."/>
            <person name="Chan A.P."/>
            <person name="Thibaud-Nissen F."/>
            <person name="Schobel S."/>
            <person name="Town C.D."/>
        </authorList>
    </citation>
    <scope>GENOME REANNOTATION</scope>
    <source>
        <strain>cv. Columbia</strain>
    </source>
</reference>
<reference key="3">
    <citation type="journal article" date="2003" name="Science">
        <title>Empirical analysis of transcriptional activity in the Arabidopsis genome.</title>
        <authorList>
            <person name="Yamada K."/>
            <person name="Lim J."/>
            <person name="Dale J.M."/>
            <person name="Chen H."/>
            <person name="Shinn P."/>
            <person name="Palm C.J."/>
            <person name="Southwick A.M."/>
            <person name="Wu H.C."/>
            <person name="Kim C.J."/>
            <person name="Nguyen M."/>
            <person name="Pham P.K."/>
            <person name="Cheuk R.F."/>
            <person name="Karlin-Newmann G."/>
            <person name="Liu S.X."/>
            <person name="Lam B."/>
            <person name="Sakano H."/>
            <person name="Wu T."/>
            <person name="Yu G."/>
            <person name="Miranda M."/>
            <person name="Quach H.L."/>
            <person name="Tripp M."/>
            <person name="Chang C.H."/>
            <person name="Lee J.M."/>
            <person name="Toriumi M.J."/>
            <person name="Chan M.M."/>
            <person name="Tang C.C."/>
            <person name="Onodera C.S."/>
            <person name="Deng J.M."/>
            <person name="Akiyama K."/>
            <person name="Ansari Y."/>
            <person name="Arakawa T."/>
            <person name="Banh J."/>
            <person name="Banno F."/>
            <person name="Bowser L."/>
            <person name="Brooks S.Y."/>
            <person name="Carninci P."/>
            <person name="Chao Q."/>
            <person name="Choy N."/>
            <person name="Enju A."/>
            <person name="Goldsmith A.D."/>
            <person name="Gurjal M."/>
            <person name="Hansen N.F."/>
            <person name="Hayashizaki Y."/>
            <person name="Johnson-Hopson C."/>
            <person name="Hsuan V.W."/>
            <person name="Iida K."/>
            <person name="Karnes M."/>
            <person name="Khan S."/>
            <person name="Koesema E."/>
            <person name="Ishida J."/>
            <person name="Jiang P.X."/>
            <person name="Jones T."/>
            <person name="Kawai J."/>
            <person name="Kamiya A."/>
            <person name="Meyers C."/>
            <person name="Nakajima M."/>
            <person name="Narusaka M."/>
            <person name="Seki M."/>
            <person name="Sakurai T."/>
            <person name="Satou M."/>
            <person name="Tamse R."/>
            <person name="Vaysberg M."/>
            <person name="Wallender E.K."/>
            <person name="Wong C."/>
            <person name="Yamamura Y."/>
            <person name="Yuan S."/>
            <person name="Shinozaki K."/>
            <person name="Davis R.W."/>
            <person name="Theologis A."/>
            <person name="Ecker J.R."/>
        </authorList>
    </citation>
    <scope>NUCLEOTIDE SEQUENCE [LARGE SCALE MRNA]</scope>
    <source>
        <strain>cv. Columbia</strain>
    </source>
</reference>
<reference key="4">
    <citation type="journal article" date="2008" name="BMC Genomics">
        <title>Genome-wide analysis of CCCH zinc finger family in Arabidopsis and rice.</title>
        <authorList>
            <person name="Wang D."/>
            <person name="Guo Y."/>
            <person name="Wu C."/>
            <person name="Yang G."/>
            <person name="Li Y."/>
            <person name="Zheng C."/>
        </authorList>
    </citation>
    <scope>NOMENCLATURE</scope>
</reference>
<reference key="5">
    <citation type="journal article" date="2008" name="FEBS Lett.">
        <title>Ribonuclease activity is a common property of Arabidopsis CCCH-containing zinc-finger proteins.</title>
        <authorList>
            <person name="Addepalli B."/>
            <person name="Hunt A.G."/>
        </authorList>
    </citation>
    <scope>FUNCTION</scope>
</reference>
<comment type="function">
    <text evidence="4">Possesses RNA-binding and ribonuclease activities in vitro.</text>
</comment>
<comment type="subcellular location">
    <subcellularLocation>
        <location evidence="1">Nucleus</location>
    </subcellularLocation>
</comment>
<comment type="sequence caution" evidence="5">
    <conflict type="erroneous gene model prediction">
        <sequence resource="EMBL-CDS" id="AAF40461"/>
    </conflict>
</comment>
<name>C3H3_ARATH</name>
<feature type="chain" id="PRO_0000213918" description="Zinc finger CCCH domain-containing protein 3">
    <location>
        <begin position="1"/>
        <end position="404"/>
    </location>
</feature>
<feature type="zinc finger region" description="C3H1-type 1" evidence="2">
    <location>
        <begin position="47"/>
        <end position="75"/>
    </location>
</feature>
<feature type="zinc finger region" description="C3H1-type 2" evidence="2">
    <location>
        <begin position="90"/>
        <end position="118"/>
    </location>
</feature>
<feature type="zinc finger region" description="C3H1-type 3" evidence="2">
    <location>
        <begin position="135"/>
        <end position="163"/>
    </location>
</feature>
<feature type="zinc finger region" description="C3H1-type 4" evidence="2">
    <location>
        <begin position="261"/>
        <end position="289"/>
    </location>
</feature>
<feature type="zinc finger region" description="C3H1-type 5" evidence="2">
    <location>
        <begin position="307"/>
        <end position="335"/>
    </location>
</feature>
<feature type="region of interest" description="Disordered" evidence="3">
    <location>
        <begin position="350"/>
        <end position="404"/>
    </location>
</feature>
<feature type="compositionally biased region" description="Polar residues" evidence="3">
    <location>
        <begin position="350"/>
        <end position="374"/>
    </location>
</feature>
<feature type="compositionally biased region" description="Basic and acidic residues" evidence="3">
    <location>
        <begin position="377"/>
        <end position="391"/>
    </location>
</feature>
<accession>Q94AD9</accession>
<accession>Q9MAU8</accession>
<organism>
    <name type="scientific">Arabidopsis thaliana</name>
    <name type="common">Mouse-ear cress</name>
    <dbReference type="NCBI Taxonomy" id="3702"/>
    <lineage>
        <taxon>Eukaryota</taxon>
        <taxon>Viridiplantae</taxon>
        <taxon>Streptophyta</taxon>
        <taxon>Embryophyta</taxon>
        <taxon>Tracheophyta</taxon>
        <taxon>Spermatophyta</taxon>
        <taxon>Magnoliopsida</taxon>
        <taxon>eudicotyledons</taxon>
        <taxon>Gunneridae</taxon>
        <taxon>Pentapetalae</taxon>
        <taxon>rosids</taxon>
        <taxon>malvids</taxon>
        <taxon>Brassicales</taxon>
        <taxon>Brassicaceae</taxon>
        <taxon>Camelineae</taxon>
        <taxon>Arabidopsis</taxon>
    </lineage>
</organism>